<evidence type="ECO:0000255" key="1">
    <source>
        <dbReference type="HAMAP-Rule" id="MF_00293"/>
    </source>
</evidence>
<feature type="chain" id="PRO_0000207930" description="Protein PsbN">
    <location>
        <begin position="1"/>
        <end position="43"/>
    </location>
</feature>
<feature type="transmembrane region" description="Helical" evidence="1">
    <location>
        <begin position="7"/>
        <end position="27"/>
    </location>
</feature>
<accession>Q7IW41</accession>
<geneLocation type="chloroplast"/>
<comment type="function">
    <text evidence="1">May play a role in photosystem I and II biogenesis.</text>
</comment>
<comment type="subcellular location">
    <subcellularLocation>
        <location evidence="1">Plastid</location>
        <location evidence="1">Chloroplast thylakoid membrane</location>
        <topology evidence="1">Single-pass membrane protein</topology>
    </subcellularLocation>
</comment>
<comment type="similarity">
    <text evidence="1">Belongs to the PsbN family.</text>
</comment>
<comment type="caution">
    <text evidence="1">Originally thought to be a component of PSII; based on experiments in Synechocystis, N.tabacum and barley, and its absence from PSII in T.elongatus and T.vulcanus, this is probably not true.</text>
</comment>
<gene>
    <name evidence="1" type="primary">psbN</name>
</gene>
<sequence>METATLVAIFISGLLVSFTGYALYTAFGQPSQQLRDPFEEHGD</sequence>
<proteinExistence type="inferred from homology"/>
<protein>
    <recommendedName>
        <fullName evidence="1">Protein PsbN</fullName>
    </recommendedName>
</protein>
<name>PSBN_NYMOD</name>
<dbReference type="EMBL" id="AF188851">
    <property type="protein sequence ID" value="AAF82668.1"/>
    <property type="molecule type" value="Genomic_DNA"/>
</dbReference>
<dbReference type="RefSeq" id="YP_010167572.1">
    <property type="nucleotide sequence ID" value="NC_057567.1"/>
</dbReference>
<dbReference type="SMR" id="Q7IW41"/>
<dbReference type="GeneID" id="67273918"/>
<dbReference type="GO" id="GO:0009535">
    <property type="term" value="C:chloroplast thylakoid membrane"/>
    <property type="evidence" value="ECO:0007669"/>
    <property type="project" value="UniProtKB-SubCell"/>
</dbReference>
<dbReference type="GO" id="GO:0015979">
    <property type="term" value="P:photosynthesis"/>
    <property type="evidence" value="ECO:0007669"/>
    <property type="project" value="InterPro"/>
</dbReference>
<dbReference type="HAMAP" id="MF_00293">
    <property type="entry name" value="PSII_PsbN"/>
    <property type="match status" value="1"/>
</dbReference>
<dbReference type="InterPro" id="IPR003398">
    <property type="entry name" value="PSII_PsbN"/>
</dbReference>
<dbReference type="PANTHER" id="PTHR35326">
    <property type="entry name" value="PROTEIN PSBN"/>
    <property type="match status" value="1"/>
</dbReference>
<dbReference type="PANTHER" id="PTHR35326:SF3">
    <property type="entry name" value="PROTEIN PSBN"/>
    <property type="match status" value="1"/>
</dbReference>
<dbReference type="Pfam" id="PF02468">
    <property type="entry name" value="PsbN"/>
    <property type="match status" value="1"/>
</dbReference>
<organism>
    <name type="scientific">Nymphaea odorata</name>
    <name type="common">White water lily</name>
    <dbReference type="NCBI Taxonomy" id="4419"/>
    <lineage>
        <taxon>Eukaryota</taxon>
        <taxon>Viridiplantae</taxon>
        <taxon>Streptophyta</taxon>
        <taxon>Embryophyta</taxon>
        <taxon>Tracheophyta</taxon>
        <taxon>Spermatophyta</taxon>
        <taxon>Magnoliopsida</taxon>
        <taxon>Nymphaeales</taxon>
        <taxon>Nymphaeaceae</taxon>
        <taxon>Nymphaea</taxon>
    </lineage>
</organism>
<keyword id="KW-0150">Chloroplast</keyword>
<keyword id="KW-0472">Membrane</keyword>
<keyword id="KW-0934">Plastid</keyword>
<keyword id="KW-0793">Thylakoid</keyword>
<keyword id="KW-0812">Transmembrane</keyword>
<keyword id="KW-1133">Transmembrane helix</keyword>
<reference key="1">
    <citation type="journal article" date="2000" name="Curr. Genet.">
        <title>Evolutionary significance of an unusual chloroplast DNA inversion found in two basal angiosperm lineages.</title>
        <authorList>
            <person name="Graham S.W."/>
            <person name="Olmstead R.G."/>
        </authorList>
    </citation>
    <scope>NUCLEOTIDE SEQUENCE [GENOMIC DNA]</scope>
</reference>